<reference key="1">
    <citation type="journal article" date="2009" name="Infect. Immun.">
        <title>Comparative genomics reveal extensive transposon-mediated genomic plasticity and diversity among potential effector proteins within the genus Coxiella.</title>
        <authorList>
            <person name="Beare P.A."/>
            <person name="Unsworth N."/>
            <person name="Andoh M."/>
            <person name="Voth D.E."/>
            <person name="Omsland A."/>
            <person name="Gilk S.D."/>
            <person name="Williams K.P."/>
            <person name="Sobral B.W."/>
            <person name="Kupko J.J. III"/>
            <person name="Porcella S.F."/>
            <person name="Samuel J.E."/>
            <person name="Heinzen R.A."/>
        </authorList>
    </citation>
    <scope>NUCLEOTIDE SEQUENCE [LARGE SCALE GENOMIC DNA]</scope>
    <source>
        <strain>Dugway 5J108-111</strain>
    </source>
</reference>
<organism>
    <name type="scientific">Coxiella burnetii (strain Dugway 5J108-111)</name>
    <dbReference type="NCBI Taxonomy" id="434922"/>
    <lineage>
        <taxon>Bacteria</taxon>
        <taxon>Pseudomonadati</taxon>
        <taxon>Pseudomonadota</taxon>
        <taxon>Gammaproteobacteria</taxon>
        <taxon>Legionellales</taxon>
        <taxon>Coxiellaceae</taxon>
        <taxon>Coxiella</taxon>
    </lineage>
</organism>
<comment type="function">
    <text evidence="1">Aspartyl-tRNA synthetase with relaxed tRNA specificity since it is able to aspartylate not only its cognate tRNA(Asp) but also tRNA(Asn). Reaction proceeds in two steps: L-aspartate is first activated by ATP to form Asp-AMP and then transferred to the acceptor end of tRNA(Asp/Asn).</text>
</comment>
<comment type="catalytic activity">
    <reaction evidence="1">
        <text>tRNA(Asx) + L-aspartate + ATP = L-aspartyl-tRNA(Asx) + AMP + diphosphate</text>
        <dbReference type="Rhea" id="RHEA:18349"/>
        <dbReference type="Rhea" id="RHEA-COMP:9710"/>
        <dbReference type="Rhea" id="RHEA-COMP:9711"/>
        <dbReference type="ChEBI" id="CHEBI:29991"/>
        <dbReference type="ChEBI" id="CHEBI:30616"/>
        <dbReference type="ChEBI" id="CHEBI:33019"/>
        <dbReference type="ChEBI" id="CHEBI:78442"/>
        <dbReference type="ChEBI" id="CHEBI:78516"/>
        <dbReference type="ChEBI" id="CHEBI:456215"/>
        <dbReference type="EC" id="6.1.1.23"/>
    </reaction>
</comment>
<comment type="subunit">
    <text evidence="1">Homodimer.</text>
</comment>
<comment type="subcellular location">
    <subcellularLocation>
        <location evidence="1">Cytoplasm</location>
    </subcellularLocation>
</comment>
<comment type="similarity">
    <text evidence="1">Belongs to the class-II aminoacyl-tRNA synthetase family. Type 1 subfamily.</text>
</comment>
<comment type="sequence caution" evidence="2">
    <conflict type="erroneous initiation">
        <sequence resource="EMBL-CDS" id="ABS76474"/>
    </conflict>
</comment>
<keyword id="KW-0030">Aminoacyl-tRNA synthetase</keyword>
<keyword id="KW-0067">ATP-binding</keyword>
<keyword id="KW-0963">Cytoplasm</keyword>
<keyword id="KW-0436">Ligase</keyword>
<keyword id="KW-0547">Nucleotide-binding</keyword>
<keyword id="KW-0648">Protein biosynthesis</keyword>
<name>SYDND_COXBN</name>
<sequence>MRTHYADKVDSSLIDQTITLCGWVHRRRDHGGLIFIDLRDREGLVQVVCNPTESTVFKVAESLRNEYVIKVTGKVHKRPEGTVNPHIPSGEVEIAASDITLLNKSKPLPFNIDEYQEVSEEVRLKFRYLDLRRPEVAQRLKMRSYIIREIRRFLDERGFLDIETPMLTKSTPEGARDYLVPSRTHPGQFFALPQSPQIFKEILMVAGFDRYYQIVRCFRDEDLRADRQPEFTQLDLEMSFVEEKDIQQLMETMIRHLFSTFLNVPLPDPFPRITYDEAIKTYGTDRPDLRNPLTLVDVTDLMKSVEFKVFKEPANNPHGRIAVLRLPKGAELSRKAIDDYTQFVGIYGAKGLAYIKVENIDNGTGGLHSPILKFLPENVIAEILKRTQAQSGDILFFGADKAKIVNESLGALRDRLCADLNLYEGQWKPVWVVDFPMFDREDVGDWQALHHPFTALQETDPEKVIANPGDVLSRAYDIVLNGSEIGGGSIRINDIGMQYAVLKVLGISKEMAEAQFGHLLMALQFGSPPLGGIAFGLDRLVAIMTGASSIRDVIAFPKTQTAQCPLTNAPAQVETLQLETLGLKVSKHRK</sequence>
<accession>A9KF44</accession>
<feature type="chain" id="PRO_1000074698" description="Aspartate--tRNA(Asp/Asn) ligase">
    <location>
        <begin position="1"/>
        <end position="590"/>
    </location>
</feature>
<feature type="region of interest" description="Aspartate" evidence="1">
    <location>
        <begin position="197"/>
        <end position="200"/>
    </location>
</feature>
<feature type="binding site" evidence="1">
    <location>
        <position position="173"/>
    </location>
    <ligand>
        <name>L-aspartate</name>
        <dbReference type="ChEBI" id="CHEBI:29991"/>
    </ligand>
</feature>
<feature type="binding site" evidence="1">
    <location>
        <begin position="219"/>
        <end position="221"/>
    </location>
    <ligand>
        <name>ATP</name>
        <dbReference type="ChEBI" id="CHEBI:30616"/>
    </ligand>
</feature>
<feature type="binding site" evidence="1">
    <location>
        <position position="219"/>
    </location>
    <ligand>
        <name>L-aspartate</name>
        <dbReference type="ChEBI" id="CHEBI:29991"/>
    </ligand>
</feature>
<feature type="binding site" evidence="1">
    <location>
        <position position="228"/>
    </location>
    <ligand>
        <name>ATP</name>
        <dbReference type="ChEBI" id="CHEBI:30616"/>
    </ligand>
</feature>
<feature type="binding site" evidence="1">
    <location>
        <position position="450"/>
    </location>
    <ligand>
        <name>L-aspartate</name>
        <dbReference type="ChEBI" id="CHEBI:29991"/>
    </ligand>
</feature>
<feature type="binding site" evidence="1">
    <location>
        <position position="484"/>
    </location>
    <ligand>
        <name>ATP</name>
        <dbReference type="ChEBI" id="CHEBI:30616"/>
    </ligand>
</feature>
<feature type="binding site" evidence="1">
    <location>
        <position position="491"/>
    </location>
    <ligand>
        <name>L-aspartate</name>
        <dbReference type="ChEBI" id="CHEBI:29991"/>
    </ligand>
</feature>
<feature type="binding site" evidence="1">
    <location>
        <begin position="536"/>
        <end position="539"/>
    </location>
    <ligand>
        <name>ATP</name>
        <dbReference type="ChEBI" id="CHEBI:30616"/>
    </ligand>
</feature>
<feature type="site" description="Important for tRNA non-discrimination" evidence="1">
    <location>
        <position position="30"/>
    </location>
</feature>
<feature type="site" description="Important for tRNA non-discrimination" evidence="1">
    <location>
        <position position="81"/>
    </location>
</feature>
<protein>
    <recommendedName>
        <fullName evidence="1">Aspartate--tRNA(Asp/Asn) ligase</fullName>
        <ecNumber evidence="1">6.1.1.23</ecNumber>
    </recommendedName>
    <alternativeName>
        <fullName evidence="1">Aspartyl-tRNA synthetase</fullName>
        <shortName evidence="1">AspRS</shortName>
    </alternativeName>
    <alternativeName>
        <fullName evidence="1">Non-discriminating aspartyl-tRNA synthetase</fullName>
        <shortName evidence="1">ND-AspRS</shortName>
    </alternativeName>
</protein>
<gene>
    <name evidence="1" type="primary">aspS</name>
    <name type="ordered locus">CBUD_0423</name>
</gene>
<proteinExistence type="inferred from homology"/>
<dbReference type="EC" id="6.1.1.23" evidence="1"/>
<dbReference type="EMBL" id="CP000733">
    <property type="protein sequence ID" value="ABS76474.2"/>
    <property type="status" value="ALT_INIT"/>
    <property type="molecule type" value="Genomic_DNA"/>
</dbReference>
<dbReference type="SMR" id="A9KF44"/>
<dbReference type="KEGG" id="cbd:CBUD_0423"/>
<dbReference type="HOGENOM" id="CLU_014330_3_2_6"/>
<dbReference type="Proteomes" id="UP000008555">
    <property type="component" value="Chromosome"/>
</dbReference>
<dbReference type="GO" id="GO:0005737">
    <property type="term" value="C:cytoplasm"/>
    <property type="evidence" value="ECO:0007669"/>
    <property type="project" value="UniProtKB-SubCell"/>
</dbReference>
<dbReference type="GO" id="GO:0004815">
    <property type="term" value="F:aspartate-tRNA ligase activity"/>
    <property type="evidence" value="ECO:0007669"/>
    <property type="project" value="UniProtKB-UniRule"/>
</dbReference>
<dbReference type="GO" id="GO:0050560">
    <property type="term" value="F:aspartate-tRNA(Asn) ligase activity"/>
    <property type="evidence" value="ECO:0007669"/>
    <property type="project" value="UniProtKB-EC"/>
</dbReference>
<dbReference type="GO" id="GO:0005524">
    <property type="term" value="F:ATP binding"/>
    <property type="evidence" value="ECO:0007669"/>
    <property type="project" value="UniProtKB-UniRule"/>
</dbReference>
<dbReference type="GO" id="GO:0003676">
    <property type="term" value="F:nucleic acid binding"/>
    <property type="evidence" value="ECO:0007669"/>
    <property type="project" value="InterPro"/>
</dbReference>
<dbReference type="GO" id="GO:0006422">
    <property type="term" value="P:aspartyl-tRNA aminoacylation"/>
    <property type="evidence" value="ECO:0007669"/>
    <property type="project" value="UniProtKB-UniRule"/>
</dbReference>
<dbReference type="CDD" id="cd00777">
    <property type="entry name" value="AspRS_core"/>
    <property type="match status" value="1"/>
</dbReference>
<dbReference type="CDD" id="cd04317">
    <property type="entry name" value="EcAspRS_like_N"/>
    <property type="match status" value="1"/>
</dbReference>
<dbReference type="Gene3D" id="3.30.930.10">
    <property type="entry name" value="Bira Bifunctional Protein, Domain 2"/>
    <property type="match status" value="1"/>
</dbReference>
<dbReference type="Gene3D" id="3.30.1360.30">
    <property type="entry name" value="GAD-like domain"/>
    <property type="match status" value="1"/>
</dbReference>
<dbReference type="Gene3D" id="2.40.50.140">
    <property type="entry name" value="Nucleic acid-binding proteins"/>
    <property type="match status" value="1"/>
</dbReference>
<dbReference type="HAMAP" id="MF_00044">
    <property type="entry name" value="Asp_tRNA_synth_type1"/>
    <property type="match status" value="1"/>
</dbReference>
<dbReference type="InterPro" id="IPR004364">
    <property type="entry name" value="Aa-tRNA-synt_II"/>
</dbReference>
<dbReference type="InterPro" id="IPR006195">
    <property type="entry name" value="aa-tRNA-synth_II"/>
</dbReference>
<dbReference type="InterPro" id="IPR045864">
    <property type="entry name" value="aa-tRNA-synth_II/BPL/LPL"/>
</dbReference>
<dbReference type="InterPro" id="IPR004524">
    <property type="entry name" value="Asp-tRNA-ligase_1"/>
</dbReference>
<dbReference type="InterPro" id="IPR047089">
    <property type="entry name" value="Asp-tRNA-ligase_1_N"/>
</dbReference>
<dbReference type="InterPro" id="IPR002312">
    <property type="entry name" value="Asp/Asn-tRNA-synth_IIb"/>
</dbReference>
<dbReference type="InterPro" id="IPR047090">
    <property type="entry name" value="AspRS_core"/>
</dbReference>
<dbReference type="InterPro" id="IPR004115">
    <property type="entry name" value="GAD-like_sf"/>
</dbReference>
<dbReference type="InterPro" id="IPR029351">
    <property type="entry name" value="GAD_dom"/>
</dbReference>
<dbReference type="InterPro" id="IPR012340">
    <property type="entry name" value="NA-bd_OB-fold"/>
</dbReference>
<dbReference type="InterPro" id="IPR004365">
    <property type="entry name" value="NA-bd_OB_tRNA"/>
</dbReference>
<dbReference type="NCBIfam" id="TIGR00459">
    <property type="entry name" value="aspS_bact"/>
    <property type="match status" value="1"/>
</dbReference>
<dbReference type="NCBIfam" id="NF001750">
    <property type="entry name" value="PRK00476.1"/>
    <property type="match status" value="1"/>
</dbReference>
<dbReference type="PANTHER" id="PTHR22594:SF5">
    <property type="entry name" value="ASPARTATE--TRNA LIGASE, MITOCHONDRIAL"/>
    <property type="match status" value="1"/>
</dbReference>
<dbReference type="PANTHER" id="PTHR22594">
    <property type="entry name" value="ASPARTYL/LYSYL-TRNA SYNTHETASE"/>
    <property type="match status" value="1"/>
</dbReference>
<dbReference type="Pfam" id="PF02938">
    <property type="entry name" value="GAD"/>
    <property type="match status" value="1"/>
</dbReference>
<dbReference type="Pfam" id="PF00152">
    <property type="entry name" value="tRNA-synt_2"/>
    <property type="match status" value="1"/>
</dbReference>
<dbReference type="Pfam" id="PF01336">
    <property type="entry name" value="tRNA_anti-codon"/>
    <property type="match status" value="1"/>
</dbReference>
<dbReference type="PRINTS" id="PR01042">
    <property type="entry name" value="TRNASYNTHASP"/>
</dbReference>
<dbReference type="SUPFAM" id="SSF55681">
    <property type="entry name" value="Class II aaRS and biotin synthetases"/>
    <property type="match status" value="1"/>
</dbReference>
<dbReference type="SUPFAM" id="SSF55261">
    <property type="entry name" value="GAD domain-like"/>
    <property type="match status" value="1"/>
</dbReference>
<dbReference type="SUPFAM" id="SSF50249">
    <property type="entry name" value="Nucleic acid-binding proteins"/>
    <property type="match status" value="1"/>
</dbReference>
<dbReference type="PROSITE" id="PS50862">
    <property type="entry name" value="AA_TRNA_LIGASE_II"/>
    <property type="match status" value="1"/>
</dbReference>
<evidence type="ECO:0000255" key="1">
    <source>
        <dbReference type="HAMAP-Rule" id="MF_00044"/>
    </source>
</evidence>
<evidence type="ECO:0000305" key="2"/>